<accession>P86159</accession>
<reference evidence="9" key="1">
    <citation type="journal article" date="2008" name="J. Am. Soc. Mass Spectrom.">
        <title>Oxidation versus carboxamidomethylation of S-S bond in ranid frog peptides: pro and contra for de novo MALDI-MS sequencing.</title>
        <authorList>
            <person name="Samgina T.Y."/>
            <person name="Artemenko K.A."/>
            <person name="Gorshkov V.A."/>
            <person name="Poljakov N.B."/>
            <person name="Lebedev A.T."/>
        </authorList>
    </citation>
    <scope>PROTEIN SEQUENCE</scope>
    <scope>SUBCELLULAR LOCATION</scope>
    <scope>TISSUE SPECIFICITY</scope>
    <scope>MASS SPECTROMETRY</scope>
    <scope>DISULFIDE BOND</scope>
    <source>
        <tissue evidence="3">Skin secretion</tissue>
    </source>
</reference>
<reference key="2">
    <citation type="journal article" date="2009" name="Rapid Commun. Mass Spectrom.">
        <title>Mass spectrometric study of peptides secreted by the skin glands of the brown frog Rana arvalis from the Moscow region.</title>
        <authorList>
            <person name="Samgina T.Y."/>
            <person name="Artemenko K.A."/>
            <person name="Gorshkov V.A."/>
            <person name="Ogourtsov S.V."/>
            <person name="Zubarev R.A."/>
            <person name="Lebedev A.T."/>
        </authorList>
    </citation>
    <scope>PROTEIN SEQUENCE</scope>
    <scope>SUBCELLULAR LOCATION</scope>
    <scope>TISSUE SPECIFICITY</scope>
    <scope>DISULFIDE BOND</scope>
    <source>
        <tissue evidence="7">Skin secretion</tissue>
    </source>
</reference>
<reference key="3">
    <citation type="journal article" date="2022" name="J. Am. Soc. Mass Spectrom.">
        <title>Mass Spectrometry Differentiation between Rana arvalis Populations Based on Their Skin Peptidome Composition.</title>
        <authorList>
            <person name="Samgina T.Y."/>
            <person name="Vasileva I.D."/>
            <person name="Trebse P."/>
            <person name="Torkar G."/>
            <person name="Surin A.K."/>
            <person name="Meng Z."/>
            <person name="Zubarev R.A."/>
            <person name="Lebedev A.T."/>
        </authorList>
    </citation>
    <scope>PROTEIN SEQUENCE</scope>
    <scope>IDENTIFICATION BY MASS SPECTROMETRY</scope>
    <scope>SUBCELLULAR LOCATION</scope>
    <scope>TISSUE SPECIFICITY</scope>
    <source>
        <tissue evidence="8">Skin secretion</tissue>
    </source>
</reference>
<protein>
    <recommendedName>
        <fullName evidence="6">Brevinin-1AVa</fullName>
    </recommendedName>
</protein>
<sequence>FLPLLAASFACTVTKKC</sequence>
<comment type="function">
    <text evidence="1">Antimicrobial peptide.</text>
</comment>
<comment type="subcellular location">
    <subcellularLocation>
        <location evidence="3 4 5">Secreted</location>
    </subcellularLocation>
</comment>
<comment type="tissue specificity">
    <text evidence="3 4 5">Expressed by the skin glands.</text>
</comment>
<comment type="mass spectrometry"/>
<comment type="mass spectrometry"/>
<comment type="similarity">
    <text evidence="2">Belongs to the frog skin active peptide (FSAP) family. Brevinin subfamily.</text>
</comment>
<proteinExistence type="evidence at protein level"/>
<organism>
    <name type="scientific">Rana arvalis</name>
    <name type="common">Moor frog</name>
    <dbReference type="NCBI Taxonomy" id="156871"/>
    <lineage>
        <taxon>Eukaryota</taxon>
        <taxon>Metazoa</taxon>
        <taxon>Chordata</taxon>
        <taxon>Craniata</taxon>
        <taxon>Vertebrata</taxon>
        <taxon>Euteleostomi</taxon>
        <taxon>Amphibia</taxon>
        <taxon>Batrachia</taxon>
        <taxon>Anura</taxon>
        <taxon>Neobatrachia</taxon>
        <taxon>Ranoidea</taxon>
        <taxon>Ranidae</taxon>
        <taxon>Rana</taxon>
        <taxon>Rana</taxon>
    </lineage>
</organism>
<keyword id="KW-0878">Amphibian defense peptide</keyword>
<keyword id="KW-0044">Antibiotic</keyword>
<keyword id="KW-0929">Antimicrobial</keyword>
<keyword id="KW-0903">Direct protein sequencing</keyword>
<keyword id="KW-1015">Disulfide bond</keyword>
<keyword id="KW-0964">Secreted</keyword>
<evidence type="ECO:0000250" key="1">
    <source>
        <dbReference type="UniProtKB" id="P82826"/>
    </source>
</evidence>
<evidence type="ECO:0000255" key="2"/>
<evidence type="ECO:0000269" key="3">
    <source>
    </source>
</evidence>
<evidence type="ECO:0000269" key="4">
    <source>
    </source>
</evidence>
<evidence type="ECO:0000269" key="5">
    <source>
    </source>
</evidence>
<evidence type="ECO:0000303" key="6">
    <source>
    </source>
</evidence>
<evidence type="ECO:0000303" key="7">
    <source>
    </source>
</evidence>
<evidence type="ECO:0000303" key="8">
    <source>
    </source>
</evidence>
<evidence type="ECO:0000305" key="9"/>
<feature type="peptide" id="PRO_0000371255" description="Brevinin-1AVa" evidence="3">
    <location>
        <begin position="1"/>
        <end position="17"/>
    </location>
</feature>
<feature type="disulfide bond" evidence="3 4">
    <location>
        <begin position="11"/>
        <end position="17"/>
    </location>
</feature>
<dbReference type="GO" id="GO:0005576">
    <property type="term" value="C:extracellular region"/>
    <property type="evidence" value="ECO:0000314"/>
    <property type="project" value="UniProtKB"/>
</dbReference>
<dbReference type="GO" id="GO:0042742">
    <property type="term" value="P:defense response to bacterium"/>
    <property type="evidence" value="ECO:0007669"/>
    <property type="project" value="UniProtKB-KW"/>
</dbReference>
<name>BR1A_RANAR</name>